<dbReference type="EC" id="1.1.1.23" evidence="1"/>
<dbReference type="EMBL" id="AL591688">
    <property type="protein sequence ID" value="CAC45183.1"/>
    <property type="molecule type" value="Genomic_DNA"/>
</dbReference>
<dbReference type="RefSeq" id="NP_384717.1">
    <property type="nucleotide sequence ID" value="NC_003047.1"/>
</dbReference>
<dbReference type="RefSeq" id="WP_010968703.1">
    <property type="nucleotide sequence ID" value="NC_003047.1"/>
</dbReference>
<dbReference type="SMR" id="Q92S26"/>
<dbReference type="EnsemblBacteria" id="CAC45183">
    <property type="protein sequence ID" value="CAC45183"/>
    <property type="gene ID" value="SMc02307"/>
</dbReference>
<dbReference type="KEGG" id="sme:SMc02307"/>
<dbReference type="PATRIC" id="fig|266834.11.peg.1984"/>
<dbReference type="eggNOG" id="COG0141">
    <property type="taxonomic scope" value="Bacteria"/>
</dbReference>
<dbReference type="HOGENOM" id="CLU_006732_3_3_5"/>
<dbReference type="OrthoDB" id="9805269at2"/>
<dbReference type="UniPathway" id="UPA00031">
    <property type="reaction ID" value="UER00014"/>
</dbReference>
<dbReference type="Proteomes" id="UP000001976">
    <property type="component" value="Chromosome"/>
</dbReference>
<dbReference type="GO" id="GO:0005829">
    <property type="term" value="C:cytosol"/>
    <property type="evidence" value="ECO:0007669"/>
    <property type="project" value="TreeGrafter"/>
</dbReference>
<dbReference type="GO" id="GO:0004399">
    <property type="term" value="F:histidinol dehydrogenase activity"/>
    <property type="evidence" value="ECO:0007669"/>
    <property type="project" value="UniProtKB-UniRule"/>
</dbReference>
<dbReference type="GO" id="GO:0051287">
    <property type="term" value="F:NAD binding"/>
    <property type="evidence" value="ECO:0007669"/>
    <property type="project" value="InterPro"/>
</dbReference>
<dbReference type="GO" id="GO:0008270">
    <property type="term" value="F:zinc ion binding"/>
    <property type="evidence" value="ECO:0007669"/>
    <property type="project" value="UniProtKB-UniRule"/>
</dbReference>
<dbReference type="GO" id="GO:0000105">
    <property type="term" value="P:L-histidine biosynthetic process"/>
    <property type="evidence" value="ECO:0007669"/>
    <property type="project" value="UniProtKB-UniRule"/>
</dbReference>
<dbReference type="CDD" id="cd06572">
    <property type="entry name" value="Histidinol_dh"/>
    <property type="match status" value="1"/>
</dbReference>
<dbReference type="FunFam" id="3.40.50.1980:FF:000010">
    <property type="entry name" value="Histidinol dehydrogenase"/>
    <property type="match status" value="1"/>
</dbReference>
<dbReference type="FunFam" id="3.40.50.1980:FF:000026">
    <property type="entry name" value="Histidinol dehydrogenase"/>
    <property type="match status" value="1"/>
</dbReference>
<dbReference type="Gene3D" id="1.20.5.1300">
    <property type="match status" value="1"/>
</dbReference>
<dbReference type="Gene3D" id="3.40.50.1980">
    <property type="entry name" value="Nitrogenase molybdenum iron protein domain"/>
    <property type="match status" value="2"/>
</dbReference>
<dbReference type="HAMAP" id="MF_01024">
    <property type="entry name" value="HisD"/>
    <property type="match status" value="1"/>
</dbReference>
<dbReference type="InterPro" id="IPR016161">
    <property type="entry name" value="Ald_DH/histidinol_DH"/>
</dbReference>
<dbReference type="InterPro" id="IPR001692">
    <property type="entry name" value="Histidinol_DH_CS"/>
</dbReference>
<dbReference type="InterPro" id="IPR022695">
    <property type="entry name" value="Histidinol_DH_monofunct"/>
</dbReference>
<dbReference type="InterPro" id="IPR012131">
    <property type="entry name" value="Hstdl_DH"/>
</dbReference>
<dbReference type="NCBIfam" id="TIGR00069">
    <property type="entry name" value="hisD"/>
    <property type="match status" value="1"/>
</dbReference>
<dbReference type="PANTHER" id="PTHR21256:SF2">
    <property type="entry name" value="HISTIDINE BIOSYNTHESIS TRIFUNCTIONAL PROTEIN"/>
    <property type="match status" value="1"/>
</dbReference>
<dbReference type="PANTHER" id="PTHR21256">
    <property type="entry name" value="HISTIDINOL DEHYDROGENASE HDH"/>
    <property type="match status" value="1"/>
</dbReference>
<dbReference type="Pfam" id="PF00815">
    <property type="entry name" value="Histidinol_dh"/>
    <property type="match status" value="1"/>
</dbReference>
<dbReference type="PIRSF" id="PIRSF000099">
    <property type="entry name" value="Histidinol_dh"/>
    <property type="match status" value="1"/>
</dbReference>
<dbReference type="PRINTS" id="PR00083">
    <property type="entry name" value="HOLDHDRGNASE"/>
</dbReference>
<dbReference type="SUPFAM" id="SSF53720">
    <property type="entry name" value="ALDH-like"/>
    <property type="match status" value="1"/>
</dbReference>
<dbReference type="PROSITE" id="PS00611">
    <property type="entry name" value="HISOL_DEHYDROGENASE"/>
    <property type="match status" value="1"/>
</dbReference>
<proteinExistence type="inferred from homology"/>
<accession>Q92S26</accession>
<name>HISX_RHIME</name>
<sequence>MAIRLNYLDTSFERDFAAFLTTKREVSEDVNAVVRAIIDDVRARGDAALADYSARFDGIDFTVTGMAVTSAEIDAAIHAVAPEVLGALKVAATRIEAHHRRQLPKDDIYEDQMGVGLGSRWTPIDAVGLYVPGGTASYPSSVLMNALPAKVAGVPRIVMVVPASGGSINPAVLAAARLAGVEEIYRIGGAQAVAALAYGTETIEPVAKIVGPGNAYVAAAKRQVFGTVGIDMIAGPSEVLVIADRDNDPDWIAADLLAQAEHDAGAQAILITDDAAFGDAVEKAVERQLKTLPRAETAAASWRDFGAVILVPDFDKAVPLANRIAPEHLELATADPDAMVPAIRNAGAIFIGRHTPEVIGDYVGGSNHVLPTARSARFSSGLGVLDYVKRTSILRLGPDQLRILGPAAIALARSEGLEAHARSVAIRLNLGEEG</sequence>
<protein>
    <recommendedName>
        <fullName evidence="1">Histidinol dehydrogenase</fullName>
        <shortName evidence="1">HDH</shortName>
        <ecNumber evidence="1">1.1.1.23</ecNumber>
    </recommendedName>
</protein>
<gene>
    <name evidence="1" type="primary">hisD</name>
    <name type="ordered locus">R00611</name>
    <name type="ORF">SMc02307</name>
</gene>
<feature type="chain" id="PRO_0000135832" description="Histidinol dehydrogenase">
    <location>
        <begin position="1"/>
        <end position="434"/>
    </location>
</feature>
<feature type="active site" description="Proton acceptor" evidence="1">
    <location>
        <position position="327"/>
    </location>
</feature>
<feature type="active site" description="Proton acceptor" evidence="1">
    <location>
        <position position="328"/>
    </location>
</feature>
<feature type="binding site" evidence="1">
    <location>
        <position position="130"/>
    </location>
    <ligand>
        <name>NAD(+)</name>
        <dbReference type="ChEBI" id="CHEBI:57540"/>
    </ligand>
</feature>
<feature type="binding site" evidence="1">
    <location>
        <position position="191"/>
    </location>
    <ligand>
        <name>NAD(+)</name>
        <dbReference type="ChEBI" id="CHEBI:57540"/>
    </ligand>
</feature>
<feature type="binding site" evidence="1">
    <location>
        <position position="214"/>
    </location>
    <ligand>
        <name>NAD(+)</name>
        <dbReference type="ChEBI" id="CHEBI:57540"/>
    </ligand>
</feature>
<feature type="binding site" evidence="1">
    <location>
        <position position="237"/>
    </location>
    <ligand>
        <name>substrate</name>
    </ligand>
</feature>
<feature type="binding site" evidence="1">
    <location>
        <position position="259"/>
    </location>
    <ligand>
        <name>substrate</name>
    </ligand>
</feature>
<feature type="binding site" evidence="1">
    <location>
        <position position="259"/>
    </location>
    <ligand>
        <name>Zn(2+)</name>
        <dbReference type="ChEBI" id="CHEBI:29105"/>
    </ligand>
</feature>
<feature type="binding site" evidence="1">
    <location>
        <position position="262"/>
    </location>
    <ligand>
        <name>substrate</name>
    </ligand>
</feature>
<feature type="binding site" evidence="1">
    <location>
        <position position="262"/>
    </location>
    <ligand>
        <name>Zn(2+)</name>
        <dbReference type="ChEBI" id="CHEBI:29105"/>
    </ligand>
</feature>
<feature type="binding site" evidence="1">
    <location>
        <position position="328"/>
    </location>
    <ligand>
        <name>substrate</name>
    </ligand>
</feature>
<feature type="binding site" evidence="1">
    <location>
        <position position="361"/>
    </location>
    <ligand>
        <name>substrate</name>
    </ligand>
</feature>
<feature type="binding site" evidence="1">
    <location>
        <position position="361"/>
    </location>
    <ligand>
        <name>Zn(2+)</name>
        <dbReference type="ChEBI" id="CHEBI:29105"/>
    </ligand>
</feature>
<feature type="binding site" evidence="1">
    <location>
        <position position="415"/>
    </location>
    <ligand>
        <name>substrate</name>
    </ligand>
</feature>
<feature type="binding site" evidence="1">
    <location>
        <position position="420"/>
    </location>
    <ligand>
        <name>substrate</name>
    </ligand>
</feature>
<feature type="binding site" evidence="1">
    <location>
        <position position="420"/>
    </location>
    <ligand>
        <name>Zn(2+)</name>
        <dbReference type="ChEBI" id="CHEBI:29105"/>
    </ligand>
</feature>
<reference key="1">
    <citation type="journal article" date="2001" name="Proc. Natl. Acad. Sci. U.S.A.">
        <title>Analysis of the chromosome sequence of the legume symbiont Sinorhizobium meliloti strain 1021.</title>
        <authorList>
            <person name="Capela D."/>
            <person name="Barloy-Hubler F."/>
            <person name="Gouzy J."/>
            <person name="Bothe G."/>
            <person name="Ampe F."/>
            <person name="Batut J."/>
            <person name="Boistard P."/>
            <person name="Becker A."/>
            <person name="Boutry M."/>
            <person name="Cadieu E."/>
            <person name="Dreano S."/>
            <person name="Gloux S."/>
            <person name="Godrie T."/>
            <person name="Goffeau A."/>
            <person name="Kahn D."/>
            <person name="Kiss E."/>
            <person name="Lelaure V."/>
            <person name="Masuy D."/>
            <person name="Pohl T."/>
            <person name="Portetelle D."/>
            <person name="Puehler A."/>
            <person name="Purnelle B."/>
            <person name="Ramsperger U."/>
            <person name="Renard C."/>
            <person name="Thebault P."/>
            <person name="Vandenbol M."/>
            <person name="Weidner S."/>
            <person name="Galibert F."/>
        </authorList>
    </citation>
    <scope>NUCLEOTIDE SEQUENCE [LARGE SCALE GENOMIC DNA]</scope>
    <source>
        <strain>1021</strain>
    </source>
</reference>
<reference key="2">
    <citation type="journal article" date="2001" name="Science">
        <title>The composite genome of the legume symbiont Sinorhizobium meliloti.</title>
        <authorList>
            <person name="Galibert F."/>
            <person name="Finan T.M."/>
            <person name="Long S.R."/>
            <person name="Puehler A."/>
            <person name="Abola P."/>
            <person name="Ampe F."/>
            <person name="Barloy-Hubler F."/>
            <person name="Barnett M.J."/>
            <person name="Becker A."/>
            <person name="Boistard P."/>
            <person name="Bothe G."/>
            <person name="Boutry M."/>
            <person name="Bowser L."/>
            <person name="Buhrmester J."/>
            <person name="Cadieu E."/>
            <person name="Capela D."/>
            <person name="Chain P."/>
            <person name="Cowie A."/>
            <person name="Davis R.W."/>
            <person name="Dreano S."/>
            <person name="Federspiel N.A."/>
            <person name="Fisher R.F."/>
            <person name="Gloux S."/>
            <person name="Godrie T."/>
            <person name="Goffeau A."/>
            <person name="Golding B."/>
            <person name="Gouzy J."/>
            <person name="Gurjal M."/>
            <person name="Hernandez-Lucas I."/>
            <person name="Hong A."/>
            <person name="Huizar L."/>
            <person name="Hyman R.W."/>
            <person name="Jones T."/>
            <person name="Kahn D."/>
            <person name="Kahn M.L."/>
            <person name="Kalman S."/>
            <person name="Keating D.H."/>
            <person name="Kiss E."/>
            <person name="Komp C."/>
            <person name="Lelaure V."/>
            <person name="Masuy D."/>
            <person name="Palm C."/>
            <person name="Peck M.C."/>
            <person name="Pohl T.M."/>
            <person name="Portetelle D."/>
            <person name="Purnelle B."/>
            <person name="Ramsperger U."/>
            <person name="Surzycki R."/>
            <person name="Thebault P."/>
            <person name="Vandenbol M."/>
            <person name="Vorhoelter F.J."/>
            <person name="Weidner S."/>
            <person name="Wells D.H."/>
            <person name="Wong K."/>
            <person name="Yeh K.-C."/>
            <person name="Batut J."/>
        </authorList>
    </citation>
    <scope>NUCLEOTIDE SEQUENCE [LARGE SCALE GENOMIC DNA]</scope>
    <source>
        <strain>1021</strain>
    </source>
</reference>
<evidence type="ECO:0000255" key="1">
    <source>
        <dbReference type="HAMAP-Rule" id="MF_01024"/>
    </source>
</evidence>
<comment type="function">
    <text evidence="1">Catalyzes the sequential NAD-dependent oxidations of L-histidinol to L-histidinaldehyde and then to L-histidine.</text>
</comment>
<comment type="catalytic activity">
    <reaction evidence="1">
        <text>L-histidinol + 2 NAD(+) + H2O = L-histidine + 2 NADH + 3 H(+)</text>
        <dbReference type="Rhea" id="RHEA:20641"/>
        <dbReference type="ChEBI" id="CHEBI:15377"/>
        <dbReference type="ChEBI" id="CHEBI:15378"/>
        <dbReference type="ChEBI" id="CHEBI:57540"/>
        <dbReference type="ChEBI" id="CHEBI:57595"/>
        <dbReference type="ChEBI" id="CHEBI:57699"/>
        <dbReference type="ChEBI" id="CHEBI:57945"/>
        <dbReference type="EC" id="1.1.1.23"/>
    </reaction>
</comment>
<comment type="cofactor">
    <cofactor evidence="1">
        <name>Zn(2+)</name>
        <dbReference type="ChEBI" id="CHEBI:29105"/>
    </cofactor>
    <text evidence="1">Binds 1 zinc ion per subunit.</text>
</comment>
<comment type="pathway">
    <text evidence="1">Amino-acid biosynthesis; L-histidine biosynthesis; L-histidine from 5-phospho-alpha-D-ribose 1-diphosphate: step 9/9.</text>
</comment>
<comment type="similarity">
    <text evidence="1">Belongs to the histidinol dehydrogenase family.</text>
</comment>
<keyword id="KW-0028">Amino-acid biosynthesis</keyword>
<keyword id="KW-0368">Histidine biosynthesis</keyword>
<keyword id="KW-0479">Metal-binding</keyword>
<keyword id="KW-0520">NAD</keyword>
<keyword id="KW-0560">Oxidoreductase</keyword>
<keyword id="KW-1185">Reference proteome</keyword>
<keyword id="KW-0862">Zinc</keyword>
<organism>
    <name type="scientific">Rhizobium meliloti (strain 1021)</name>
    <name type="common">Ensifer meliloti</name>
    <name type="synonym">Sinorhizobium meliloti</name>
    <dbReference type="NCBI Taxonomy" id="266834"/>
    <lineage>
        <taxon>Bacteria</taxon>
        <taxon>Pseudomonadati</taxon>
        <taxon>Pseudomonadota</taxon>
        <taxon>Alphaproteobacteria</taxon>
        <taxon>Hyphomicrobiales</taxon>
        <taxon>Rhizobiaceae</taxon>
        <taxon>Sinorhizobium/Ensifer group</taxon>
        <taxon>Sinorhizobium</taxon>
    </lineage>
</organism>